<sequence>MVKSTTAGNNAVSSLESTDSKKSRKEKSREKEHRRAQCINSAFEILQQHIPYLKSEERKSLPKIKTLRLAMQYIDHLKKLLGGNEMLETDCNESRPLTHSDFRVNISNEIRIRNSYRERAHNQELDEATVKRILAREDQRRRCSSVPEGIQRYTPYQSRQFGPISNNVCNFRHVDANQYNTNFMEYQTQMVQVANFPNQFSHEYYNYGTFPVIDPTSLENSNPILQ</sequence>
<keyword id="KW-0217">Developmental protein</keyword>
<keyword id="KW-0238">DNA-binding</keyword>
<keyword id="KW-0517">Myogenesis</keyword>
<keyword id="KW-0539">Nucleus</keyword>
<keyword id="KW-1185">Reference proteome</keyword>
<keyword id="KW-0804">Transcription</keyword>
<keyword id="KW-0805">Transcription regulation</keyword>
<organism evidence="8">
    <name type="scientific">Caenorhabditis elegans</name>
    <dbReference type="NCBI Taxonomy" id="6239"/>
    <lineage>
        <taxon>Eukaryota</taxon>
        <taxon>Metazoa</taxon>
        <taxon>Ecdysozoa</taxon>
        <taxon>Nematoda</taxon>
        <taxon>Chromadorea</taxon>
        <taxon>Rhabditida</taxon>
        <taxon>Rhabditina</taxon>
        <taxon>Rhabditomorpha</taxon>
        <taxon>Rhabditoidea</taxon>
        <taxon>Rhabditidae</taxon>
        <taxon>Peloderinae</taxon>
        <taxon>Caenorhabditis</taxon>
    </lineage>
</organism>
<protein>
    <recommendedName>
        <fullName evidence="6">Hand transcription factor 1</fullName>
    </recommendedName>
</protein>
<proteinExistence type="evidence at transcript level"/>
<gene>
    <name evidence="9" type="primary">hnd-1</name>
    <name evidence="9" type="ORF">C44C10.8</name>
</gene>
<evidence type="ECO:0000255" key="1">
    <source>
        <dbReference type="PROSITE-ProRule" id="PRU00981"/>
    </source>
</evidence>
<evidence type="ECO:0000256" key="2">
    <source>
        <dbReference type="SAM" id="MobiDB-lite"/>
    </source>
</evidence>
<evidence type="ECO:0000269" key="3">
    <source>
    </source>
</evidence>
<evidence type="ECO:0000269" key="4">
    <source>
    </source>
</evidence>
<evidence type="ECO:0000269" key="5">
    <source>
    </source>
</evidence>
<evidence type="ECO:0000303" key="6">
    <source>
    </source>
</evidence>
<evidence type="ECO:0000305" key="7"/>
<evidence type="ECO:0000312" key="8">
    <source>
        <dbReference type="Proteomes" id="UP000001940"/>
    </source>
</evidence>
<evidence type="ECO:0000312" key="9">
    <source>
        <dbReference type="WormBase" id="C44C10.8"/>
    </source>
</evidence>
<comment type="function">
    <text evidence="3 4 5">Probable transcription factor which regulates early embryonic myogenesis, in cooperation with transcription factors unc-120 and hlh-1 (PubMed:15892873, PubMed:17142668). Involved in controlling the number and position of somatic gonadal precursor cells (SGPs) in the gonadal primordium, and embryonic body shape (PubMed:12756172).</text>
</comment>
<comment type="subcellular location">
    <subcellularLocation>
        <location evidence="1">Nucleus</location>
    </subcellularLocation>
</comment>
<comment type="developmental stage">
    <text evidence="3">Expressed in the MS, C and D embryonic lineages, which develop into somatic gonadal precursor cells (SGPs), other mesodermal cells and bodywall muscle (PubMed:12756172). Expression is abolished in most body muscle cells by the comma stage of embryogenesis, but continues in the SGPs (Z1 and Z4), and then is abolished shortly after assembly of the gonadal primordium (PubMed:12756172).</text>
</comment>
<comment type="disruption phenotype">
    <text evidence="3 4 5">Adults are viable and fertile, but with a moderate frequency of somatic gonad defects, which increases on an ehn-3 mutant background (PubMed:12756172). Low frequency of embryonic lethality, with embryos arresting paralyzed at the two-fold stage; increases in frequency significantly on an hlh-1 or unc-120 mutant background (PubMed:12756172, PubMed:15892873, PubMed:17142668). Many embryos that survive to hatch become uncoordinated, dumpy larvae with variable body shape defects, typically in the posterior (PubMed:12756172, PubMed:15892873). One quarter of the embryos from homozygous hnd-1;hlh-1 heterozygous parents exhibit reduced expression of myosin myo-3 (PubMed:17142668). On a unc-120 mutant background, progeny show reduced expression of myo-3 at mid-embryogenesis (PubMed:17142668). RNAi-mediated knockdown results in abnormal number and positioning of the somatic gonadal precursor cells (SGPs) and influences the maintenance of primordial germ cells (PGCs) in L1 larvae (PubMed:15892873).</text>
</comment>
<dbReference type="EMBL" id="BX284606">
    <property type="protein sequence ID" value="CAA93634.1"/>
    <property type="molecule type" value="Genomic_DNA"/>
</dbReference>
<dbReference type="PIR" id="T19921">
    <property type="entry name" value="T19921"/>
</dbReference>
<dbReference type="RefSeq" id="NP_509952.1">
    <property type="nucleotide sequence ID" value="NM_077551.4"/>
</dbReference>
<dbReference type="SMR" id="Q18612"/>
<dbReference type="FunCoup" id="Q18612">
    <property type="interactions" value="1"/>
</dbReference>
<dbReference type="IntAct" id="Q18612">
    <property type="interactions" value="7"/>
</dbReference>
<dbReference type="STRING" id="6239.C44C10.8.1"/>
<dbReference type="PaxDb" id="6239-C44C10.8"/>
<dbReference type="EnsemblMetazoa" id="C44C10.8.1">
    <property type="protein sequence ID" value="C44C10.8.1"/>
    <property type="gene ID" value="WBGene00001981"/>
</dbReference>
<dbReference type="GeneID" id="183457"/>
<dbReference type="KEGG" id="cel:CELE_C44C10.8"/>
<dbReference type="UCSC" id="C44C10.8">
    <property type="organism name" value="c. elegans"/>
</dbReference>
<dbReference type="AGR" id="WB:WBGene00001981"/>
<dbReference type="CTD" id="183457"/>
<dbReference type="WormBase" id="C44C10.8">
    <property type="protein sequence ID" value="CE05415"/>
    <property type="gene ID" value="WBGene00001981"/>
    <property type="gene designation" value="hnd-1"/>
</dbReference>
<dbReference type="eggNOG" id="ENOG502SX5H">
    <property type="taxonomic scope" value="Eukaryota"/>
</dbReference>
<dbReference type="HOGENOM" id="CLU_1251686_0_0_1"/>
<dbReference type="InParanoid" id="Q18612"/>
<dbReference type="OMA" id="MENAYQI"/>
<dbReference type="OrthoDB" id="10055449at2759"/>
<dbReference type="SignaLink" id="Q18612"/>
<dbReference type="PRO" id="PR:Q18612"/>
<dbReference type="Proteomes" id="UP000001940">
    <property type="component" value="Chromosome X"/>
</dbReference>
<dbReference type="Bgee" id="WBGene00001981">
    <property type="expression patterns" value="Expressed in embryo and 3 other cell types or tissues"/>
</dbReference>
<dbReference type="GO" id="GO:0005634">
    <property type="term" value="C:nucleus"/>
    <property type="evidence" value="ECO:0007669"/>
    <property type="project" value="UniProtKB-SubCell"/>
</dbReference>
<dbReference type="GO" id="GO:0000981">
    <property type="term" value="F:DNA-binding transcription factor activity, RNA polymerase II-specific"/>
    <property type="evidence" value="ECO:0000318"/>
    <property type="project" value="GO_Central"/>
</dbReference>
<dbReference type="GO" id="GO:0046983">
    <property type="term" value="F:protein dimerization activity"/>
    <property type="evidence" value="ECO:0007669"/>
    <property type="project" value="InterPro"/>
</dbReference>
<dbReference type="GO" id="GO:0000977">
    <property type="term" value="F:RNA polymerase II transcription regulatory region sequence-specific DNA binding"/>
    <property type="evidence" value="ECO:0000318"/>
    <property type="project" value="GO_Central"/>
</dbReference>
<dbReference type="GO" id="GO:0032502">
    <property type="term" value="P:developmental process"/>
    <property type="evidence" value="ECO:0000318"/>
    <property type="project" value="GO_Central"/>
</dbReference>
<dbReference type="GO" id="GO:0008406">
    <property type="term" value="P:gonad development"/>
    <property type="evidence" value="ECO:0000315"/>
    <property type="project" value="UniProtKB"/>
</dbReference>
<dbReference type="GO" id="GO:0007506">
    <property type="term" value="P:gonadal mesoderm development"/>
    <property type="evidence" value="ECO:0000315"/>
    <property type="project" value="UniProtKB"/>
</dbReference>
<dbReference type="GO" id="GO:0007517">
    <property type="term" value="P:muscle organ development"/>
    <property type="evidence" value="ECO:0007669"/>
    <property type="project" value="UniProtKB-KW"/>
</dbReference>
<dbReference type="GO" id="GO:0051149">
    <property type="term" value="P:positive regulation of muscle cell differentiation"/>
    <property type="evidence" value="ECO:0000316"/>
    <property type="project" value="UniProtKB"/>
</dbReference>
<dbReference type="GO" id="GO:0006357">
    <property type="term" value="P:regulation of transcription by RNA polymerase II"/>
    <property type="evidence" value="ECO:0000318"/>
    <property type="project" value="GO_Central"/>
</dbReference>
<dbReference type="CDD" id="cd11418">
    <property type="entry name" value="bHLH_TS_ASCL"/>
    <property type="match status" value="1"/>
</dbReference>
<dbReference type="Gene3D" id="4.10.280.10">
    <property type="entry name" value="Helix-loop-helix DNA-binding domain"/>
    <property type="match status" value="1"/>
</dbReference>
<dbReference type="InterPro" id="IPR011598">
    <property type="entry name" value="bHLH_dom"/>
</dbReference>
<dbReference type="InterPro" id="IPR050283">
    <property type="entry name" value="E-box_TF_Regulators"/>
</dbReference>
<dbReference type="InterPro" id="IPR036638">
    <property type="entry name" value="HLH_DNA-bd_sf"/>
</dbReference>
<dbReference type="PANTHER" id="PTHR23349">
    <property type="entry name" value="BASIC HELIX-LOOP-HELIX TRANSCRIPTION FACTOR, TWIST"/>
    <property type="match status" value="1"/>
</dbReference>
<dbReference type="PANTHER" id="PTHR23349:SF68">
    <property type="entry name" value="FI14601P"/>
    <property type="match status" value="1"/>
</dbReference>
<dbReference type="Pfam" id="PF00010">
    <property type="entry name" value="HLH"/>
    <property type="match status" value="1"/>
</dbReference>
<dbReference type="SMART" id="SM00353">
    <property type="entry name" value="HLH"/>
    <property type="match status" value="1"/>
</dbReference>
<dbReference type="SUPFAM" id="SSF47459">
    <property type="entry name" value="HLH, helix-loop-helix DNA-binding domain"/>
    <property type="match status" value="1"/>
</dbReference>
<dbReference type="PROSITE" id="PS50888">
    <property type="entry name" value="BHLH"/>
    <property type="match status" value="1"/>
</dbReference>
<name>HND1_CAEEL</name>
<reference evidence="8" key="1">
    <citation type="journal article" date="1998" name="Science">
        <title>Genome sequence of the nematode C. elegans: a platform for investigating biology.</title>
        <authorList>
            <consortium name="The C. elegans sequencing consortium"/>
        </authorList>
    </citation>
    <scope>NUCLEOTIDE SEQUENCE [LARGE SCALE GENOMIC DNA]</scope>
    <source>
        <strain evidence="8">Bristol N2</strain>
    </source>
</reference>
<reference evidence="7" key="2">
    <citation type="journal article" date="2003" name="Development">
        <title>The C. elegans Hand gene controls embryogenesis and early gonadogenesis.</title>
        <authorList>
            <person name="Mathies L.D."/>
            <person name="Henderson S.T."/>
            <person name="Kimble J."/>
        </authorList>
    </citation>
    <scope>FUNCTION</scope>
    <scope>DEVELOPMENTAL STAGE</scope>
    <scope>DISRUPTION PHENOTYPE</scope>
</reference>
<reference evidence="7" key="3">
    <citation type="journal article" date="2005" name="Genome Biol.">
        <title>Synthetic lethal analysis of Caenorhabditis elegans posterior embryonic patterning genes identifies conserved genetic interactions.</title>
        <authorList>
            <person name="Baugh L.R."/>
            <person name="Wen J.C."/>
            <person name="Hill A.A."/>
            <person name="Slonim D.K."/>
            <person name="Brown E.L."/>
            <person name="Hunter C.P."/>
        </authorList>
    </citation>
    <scope>FUNCTION</scope>
    <scope>DISRUPTION PHENOTYPE</scope>
</reference>
<reference evidence="7" key="4">
    <citation type="journal article" date="2006" name="Genes Dev.">
        <title>Defining the transcriptional redundancy of early bodywall muscle development in C. elegans: evidence for a unified theory of animal muscle development.</title>
        <authorList>
            <person name="Fukushige T."/>
            <person name="Brodigan T.M."/>
            <person name="Schriefer L.A."/>
            <person name="Waterston R.H."/>
            <person name="Krause M."/>
        </authorList>
    </citation>
    <scope>FUNCTION</scope>
    <scope>DISRUPTION PHENOTYPE</scope>
</reference>
<accession>Q18612</accession>
<feature type="chain" id="PRO_0000451824" description="Hand transcription factor 1">
    <location>
        <begin position="1"/>
        <end position="226"/>
    </location>
</feature>
<feature type="domain" description="bHLH" evidence="1">
    <location>
        <begin position="23"/>
        <end position="77"/>
    </location>
</feature>
<feature type="region of interest" description="Disordered" evidence="2">
    <location>
        <begin position="1"/>
        <end position="35"/>
    </location>
</feature>
<feature type="region of interest" description="Basic motif" evidence="1">
    <location>
        <begin position="23"/>
        <end position="36"/>
    </location>
</feature>
<feature type="region of interest" description="Helix-loop-helix motif" evidence="1">
    <location>
        <begin position="37"/>
        <end position="77"/>
    </location>
</feature>
<feature type="compositionally biased region" description="Polar residues" evidence="2">
    <location>
        <begin position="1"/>
        <end position="15"/>
    </location>
</feature>